<reference key="1">
    <citation type="journal article" date="1993" name="J. Bacteriol.">
        <title>DNA sequence and mutational analysis of genes involved in the production and resistance of the antibiotic peptide trifolitoxin.</title>
        <authorList>
            <person name="Breil B.T."/>
            <person name="Ludden P.W."/>
            <person name="Triplett E.W."/>
        </authorList>
    </citation>
    <scope>NUCLEOTIDE SEQUENCE [GENOMIC DNA]</scope>
    <source>
        <strain>T24</strain>
    </source>
</reference>
<protein>
    <recommendedName>
        <fullName>Trifolitoxin-processing protein TfxF</fullName>
    </recommendedName>
</protein>
<sequence>MRASKTPILINGSPWLLDFRRRSSREFDWEIAEHLEVPEAYFQAYDPLTTWFEWFSRIGYRDYTDAEAEIERDAEENVRQHQVSVQPDLTLTQRLSSEGSIQLPVPFLKTADQFCILSSLLYAGFGVVETRKFHGDTIFLKNVPSVGARHGIEAYVSLDDGRYYYDCEQHRLFSAGYRGDLRSGQIDIVFRPEVYMWRYQTAACLADVYLDLGHILGTLSMVASLYDTSITSRSAEAAPVDLINAVHLQRIAVDGFNP</sequence>
<feature type="chain" id="PRO_0000072508" description="Trifolitoxin-processing protein TfxF">
    <location>
        <begin position="1"/>
        <end position="258"/>
    </location>
</feature>
<gene>
    <name type="primary">tfxF</name>
</gene>
<name>TFXF_RHILT</name>
<organism>
    <name type="scientific">Rhizobium leguminosarum bv. trifolii</name>
    <dbReference type="NCBI Taxonomy" id="386"/>
    <lineage>
        <taxon>Bacteria</taxon>
        <taxon>Pseudomonadati</taxon>
        <taxon>Pseudomonadota</taxon>
        <taxon>Alphaproteobacteria</taxon>
        <taxon>Hyphomicrobiales</taxon>
        <taxon>Rhizobiaceae</taxon>
        <taxon>Rhizobium/Agrobacterium group</taxon>
        <taxon>Rhizobium</taxon>
    </lineage>
</organism>
<dbReference type="EMBL" id="L06719">
    <property type="protein sequence ID" value="AAA26368.1"/>
    <property type="molecule type" value="Genomic_DNA"/>
</dbReference>
<dbReference type="PIR" id="F47116">
    <property type="entry name" value="F47116"/>
</dbReference>
<dbReference type="SMR" id="P42728"/>
<dbReference type="GO" id="GO:0016491">
    <property type="term" value="F:oxidoreductase activity"/>
    <property type="evidence" value="ECO:0007669"/>
    <property type="project" value="InterPro"/>
</dbReference>
<dbReference type="Gene3D" id="3.40.109.10">
    <property type="entry name" value="NADH Oxidase"/>
    <property type="match status" value="1"/>
</dbReference>
<dbReference type="InterPro" id="IPR000415">
    <property type="entry name" value="Nitroreductase-like"/>
</dbReference>
<proteinExistence type="predicted"/>
<comment type="function">
    <text>The actions of the proteins TfxB, TfxD and TfxF are implicated in the processing of the inactive trifolitoxin (TfxA) precursor into the active peptide.</text>
</comment>
<accession>P42728</accession>